<gene>
    <name evidence="1" type="primary">prfA</name>
    <name type="ordered locus">SG1876</name>
</gene>
<accession>Q2NRS4</accession>
<organism>
    <name type="scientific">Sodalis glossinidius (strain morsitans)</name>
    <dbReference type="NCBI Taxonomy" id="343509"/>
    <lineage>
        <taxon>Bacteria</taxon>
        <taxon>Pseudomonadati</taxon>
        <taxon>Pseudomonadota</taxon>
        <taxon>Gammaproteobacteria</taxon>
        <taxon>Enterobacterales</taxon>
        <taxon>Bruguierivoracaceae</taxon>
        <taxon>Sodalis</taxon>
    </lineage>
</organism>
<comment type="function">
    <text evidence="1">Peptide chain release factor 1 directs the termination of translation in response to the peptide chain termination codons UAG and UAA.</text>
</comment>
<comment type="subcellular location">
    <subcellularLocation>
        <location evidence="1">Cytoplasm</location>
    </subcellularLocation>
</comment>
<comment type="PTM">
    <text evidence="1">Methylated by PrmC. Methylation increases the termination efficiency of RF1.</text>
</comment>
<comment type="similarity">
    <text evidence="1">Belongs to the prokaryotic/mitochondrial release factor family.</text>
</comment>
<proteinExistence type="inferred from homology"/>
<sequence>MKSSIVAKLEALQERREEVEVLLGDPGVISDQIRFRALSKEYAQLSDVTRCFQHWWQVQEDIHTAEHLLQDPEMRDMAQEELLASGASLEQLEQQLQVLLLPRDPDDERGCFLEVRAGTGGDEAALFAGDLFRMYSRYAETRRWKVEIVSASYGEHGGFKEVIAKVSHEGAYGLLKFESGGHRVQRVPETESQGRIHTSACTVAVMPEIPEAELPEINAGDLRIDTFRSSGAGGQHVNTTDSAIRITHLPTGLVVECQDERSQHKNKAKALAVLGARLRAAEVQRRQQEESSTRRNLLGSGDRSDRIRTYNFPQGRVTDHRIGLTLYRLDEVIEGKLDMLIQPIMQEYQADQLAALSETP</sequence>
<protein>
    <recommendedName>
        <fullName evidence="1">Peptide chain release factor 1</fullName>
        <shortName evidence="1">RF-1</shortName>
    </recommendedName>
</protein>
<reference key="1">
    <citation type="journal article" date="2006" name="Genome Res.">
        <title>Massive genome erosion and functional adaptations provide insights into the symbiotic lifestyle of Sodalis glossinidius in the tsetse host.</title>
        <authorList>
            <person name="Toh H."/>
            <person name="Weiss B.L."/>
            <person name="Perkin S.A.H."/>
            <person name="Yamashita A."/>
            <person name="Oshima K."/>
            <person name="Hattori M."/>
            <person name="Aksoy S."/>
        </authorList>
    </citation>
    <scope>NUCLEOTIDE SEQUENCE [LARGE SCALE GENOMIC DNA]</scope>
    <source>
        <strain>morsitans</strain>
    </source>
</reference>
<keyword id="KW-0963">Cytoplasm</keyword>
<keyword id="KW-0488">Methylation</keyword>
<keyword id="KW-0648">Protein biosynthesis</keyword>
<evidence type="ECO:0000255" key="1">
    <source>
        <dbReference type="HAMAP-Rule" id="MF_00093"/>
    </source>
</evidence>
<evidence type="ECO:0000256" key="2">
    <source>
        <dbReference type="SAM" id="MobiDB-lite"/>
    </source>
</evidence>
<dbReference type="EMBL" id="AP008232">
    <property type="protein sequence ID" value="BAE75151.1"/>
    <property type="molecule type" value="Genomic_DNA"/>
</dbReference>
<dbReference type="RefSeq" id="WP_011411820.1">
    <property type="nucleotide sequence ID" value="NC_007712.1"/>
</dbReference>
<dbReference type="SMR" id="Q2NRS4"/>
<dbReference type="STRING" id="343509.SG1876"/>
<dbReference type="KEGG" id="sgl:SG1876"/>
<dbReference type="eggNOG" id="COG0216">
    <property type="taxonomic scope" value="Bacteria"/>
</dbReference>
<dbReference type="HOGENOM" id="CLU_036856_0_1_6"/>
<dbReference type="OrthoDB" id="9806673at2"/>
<dbReference type="BioCyc" id="SGLO343509:SGP1_RS17100-MONOMER"/>
<dbReference type="Proteomes" id="UP000001932">
    <property type="component" value="Chromosome"/>
</dbReference>
<dbReference type="GO" id="GO:0005737">
    <property type="term" value="C:cytoplasm"/>
    <property type="evidence" value="ECO:0007669"/>
    <property type="project" value="UniProtKB-SubCell"/>
</dbReference>
<dbReference type="GO" id="GO:0016149">
    <property type="term" value="F:translation release factor activity, codon specific"/>
    <property type="evidence" value="ECO:0007669"/>
    <property type="project" value="UniProtKB-UniRule"/>
</dbReference>
<dbReference type="FunFam" id="3.30.160.20:FF:000004">
    <property type="entry name" value="Peptide chain release factor 1"/>
    <property type="match status" value="1"/>
</dbReference>
<dbReference type="FunFam" id="3.30.70.1660:FF:000002">
    <property type="entry name" value="Peptide chain release factor 1"/>
    <property type="match status" value="1"/>
</dbReference>
<dbReference type="FunFam" id="3.30.70.1660:FF:000004">
    <property type="entry name" value="Peptide chain release factor 1"/>
    <property type="match status" value="1"/>
</dbReference>
<dbReference type="Gene3D" id="3.30.160.20">
    <property type="match status" value="1"/>
</dbReference>
<dbReference type="Gene3D" id="3.30.70.1660">
    <property type="match status" value="1"/>
</dbReference>
<dbReference type="Gene3D" id="6.10.140.1950">
    <property type="match status" value="1"/>
</dbReference>
<dbReference type="HAMAP" id="MF_00093">
    <property type="entry name" value="Rel_fac_1"/>
    <property type="match status" value="1"/>
</dbReference>
<dbReference type="InterPro" id="IPR005139">
    <property type="entry name" value="PCRF"/>
</dbReference>
<dbReference type="InterPro" id="IPR000352">
    <property type="entry name" value="Pep_chain_release_fac_I"/>
</dbReference>
<dbReference type="InterPro" id="IPR045853">
    <property type="entry name" value="Pep_chain_release_fac_I_sf"/>
</dbReference>
<dbReference type="InterPro" id="IPR050057">
    <property type="entry name" value="Prokaryotic/Mito_RF"/>
</dbReference>
<dbReference type="InterPro" id="IPR004373">
    <property type="entry name" value="RF-1"/>
</dbReference>
<dbReference type="NCBIfam" id="TIGR00019">
    <property type="entry name" value="prfA"/>
    <property type="match status" value="1"/>
</dbReference>
<dbReference type="NCBIfam" id="NF001859">
    <property type="entry name" value="PRK00591.1"/>
    <property type="match status" value="1"/>
</dbReference>
<dbReference type="PANTHER" id="PTHR43804">
    <property type="entry name" value="LD18447P"/>
    <property type="match status" value="1"/>
</dbReference>
<dbReference type="PANTHER" id="PTHR43804:SF7">
    <property type="entry name" value="LD18447P"/>
    <property type="match status" value="1"/>
</dbReference>
<dbReference type="Pfam" id="PF03462">
    <property type="entry name" value="PCRF"/>
    <property type="match status" value="1"/>
</dbReference>
<dbReference type="Pfam" id="PF00472">
    <property type="entry name" value="RF-1"/>
    <property type="match status" value="1"/>
</dbReference>
<dbReference type="SMART" id="SM00937">
    <property type="entry name" value="PCRF"/>
    <property type="match status" value="1"/>
</dbReference>
<dbReference type="SUPFAM" id="SSF75620">
    <property type="entry name" value="Release factor"/>
    <property type="match status" value="1"/>
</dbReference>
<dbReference type="PROSITE" id="PS00745">
    <property type="entry name" value="RF_PROK_I"/>
    <property type="match status" value="1"/>
</dbReference>
<name>RF1_SODGM</name>
<feature type="chain" id="PRO_0000263356" description="Peptide chain release factor 1">
    <location>
        <begin position="1"/>
        <end position="360"/>
    </location>
</feature>
<feature type="region of interest" description="Disordered" evidence="2">
    <location>
        <begin position="284"/>
        <end position="311"/>
    </location>
</feature>
<feature type="compositionally biased region" description="Basic and acidic residues" evidence="2">
    <location>
        <begin position="284"/>
        <end position="293"/>
    </location>
</feature>
<feature type="modified residue" description="N5-methylglutamine" evidence="1">
    <location>
        <position position="235"/>
    </location>
</feature>